<sequence>MQSQDYKKRLKLQIIIILSIAVMSCGVPNVPTALSSLLERESIRVGTVYGAGTFYNGAEGPQGFEYELLAGFADYLGVTLDLYPFYSYEVMLEQLEEGNLDIVATGDAVTPALKRRFAYGPAYQRVEQELVFQAGATRPRDLAELDSPIIAVAGSSQAHLLSNLFKRLSEEEDEAVQTQLITTEDSDSEELLQQVANGDIAYTVADSNRLALQRRRYPNLAVARTLNENMPMAWALPLQQDDSVKAALIEYFGTVHQSGWFTVLEDKYFGHIRQFDYVDSRAFNYAAESTLTQYKSLFQKYAGDLDWRLLAAMSYQESHWNSDAISRTGVRGLMMLTLATASDWNVDDRTDPEQSIRGGSRYFASLLNRIPARISEPDRTWMAMASYNIGMGHLEDARILTEQQGGNPDLWVDVKRRLPQLRQKKYYRTTRYGYARGDEALQYVENIRRYYDSLVWLDEQGKI</sequence>
<evidence type="ECO:0000255" key="1">
    <source>
        <dbReference type="HAMAP-Rule" id="MF_02016"/>
    </source>
</evidence>
<proteinExistence type="inferred from homology"/>
<name>MLTF_ALTMD</name>
<protein>
    <recommendedName>
        <fullName evidence="1">Membrane-bound lytic murein transglycosylase F</fullName>
        <ecNumber evidence="1">4.2.2.n1</ecNumber>
    </recommendedName>
    <alternativeName>
        <fullName evidence="1">Murein lyase F</fullName>
    </alternativeName>
</protein>
<reference key="1">
    <citation type="journal article" date="2008" name="ISME J.">
        <title>Comparative genomics of two ecotypes of the marine planktonic copiotroph Alteromonas macleodii suggests alternative lifestyles associated with different kinds of particulate organic matter.</title>
        <authorList>
            <person name="Ivars-Martinez E."/>
            <person name="Martin-Cuadrado A.-B."/>
            <person name="D'Auria G."/>
            <person name="Mira A."/>
            <person name="Ferriera S."/>
            <person name="Johnson J."/>
            <person name="Friedman R."/>
            <person name="Rodriguez-Valera F."/>
        </authorList>
    </citation>
    <scope>NUCLEOTIDE SEQUENCE [LARGE SCALE GENOMIC DNA]</scope>
    <source>
        <strain>DSM 17117 / CIP 110805 / LMG 28347 / Deep ecotype</strain>
    </source>
</reference>
<organism>
    <name type="scientific">Alteromonas mediterranea (strain DSM 17117 / CIP 110805 / LMG 28347 / Deep ecotype)</name>
    <dbReference type="NCBI Taxonomy" id="1774373"/>
    <lineage>
        <taxon>Bacteria</taxon>
        <taxon>Pseudomonadati</taxon>
        <taxon>Pseudomonadota</taxon>
        <taxon>Gammaproteobacteria</taxon>
        <taxon>Alteromonadales</taxon>
        <taxon>Alteromonadaceae</taxon>
        <taxon>Alteromonas/Salinimonas group</taxon>
        <taxon>Alteromonas</taxon>
    </lineage>
</organism>
<dbReference type="EC" id="4.2.2.n1" evidence="1"/>
<dbReference type="EMBL" id="CP001103">
    <property type="protein sequence ID" value="AEA97232.2"/>
    <property type="molecule type" value="Genomic_DNA"/>
</dbReference>
<dbReference type="RefSeq" id="WP_020743009.1">
    <property type="nucleotide sequence ID" value="NC_011138.3"/>
</dbReference>
<dbReference type="SMR" id="B4RVK5"/>
<dbReference type="CAZy" id="GH23">
    <property type="family name" value="Glycoside Hydrolase Family 23"/>
</dbReference>
<dbReference type="KEGG" id="amc:MADE_1005430"/>
<dbReference type="HOGENOM" id="CLU_027494_0_1_6"/>
<dbReference type="Proteomes" id="UP000001870">
    <property type="component" value="Chromosome"/>
</dbReference>
<dbReference type="GO" id="GO:0009279">
    <property type="term" value="C:cell outer membrane"/>
    <property type="evidence" value="ECO:0007669"/>
    <property type="project" value="UniProtKB-SubCell"/>
</dbReference>
<dbReference type="GO" id="GO:0008933">
    <property type="term" value="F:peptidoglycan lytic transglycosylase activity"/>
    <property type="evidence" value="ECO:0007669"/>
    <property type="project" value="UniProtKB-UniRule"/>
</dbReference>
<dbReference type="GO" id="GO:0016998">
    <property type="term" value="P:cell wall macromolecule catabolic process"/>
    <property type="evidence" value="ECO:0007669"/>
    <property type="project" value="UniProtKB-UniRule"/>
</dbReference>
<dbReference type="GO" id="GO:0071555">
    <property type="term" value="P:cell wall organization"/>
    <property type="evidence" value="ECO:0007669"/>
    <property type="project" value="UniProtKB-KW"/>
</dbReference>
<dbReference type="GO" id="GO:0009253">
    <property type="term" value="P:peptidoglycan catabolic process"/>
    <property type="evidence" value="ECO:0007669"/>
    <property type="project" value="TreeGrafter"/>
</dbReference>
<dbReference type="CDD" id="cd13403">
    <property type="entry name" value="MLTF-like"/>
    <property type="match status" value="1"/>
</dbReference>
<dbReference type="CDD" id="cd01009">
    <property type="entry name" value="PBP2_YfhD_N"/>
    <property type="match status" value="1"/>
</dbReference>
<dbReference type="Gene3D" id="1.10.530.10">
    <property type="match status" value="1"/>
</dbReference>
<dbReference type="Gene3D" id="3.40.190.10">
    <property type="entry name" value="Periplasmic binding protein-like II"/>
    <property type="match status" value="2"/>
</dbReference>
<dbReference type="HAMAP" id="MF_02016">
    <property type="entry name" value="MltF"/>
    <property type="match status" value="1"/>
</dbReference>
<dbReference type="InterPro" id="IPR023346">
    <property type="entry name" value="Lysozyme-like_dom_sf"/>
</dbReference>
<dbReference type="InterPro" id="IPR023703">
    <property type="entry name" value="MltF"/>
</dbReference>
<dbReference type="InterPro" id="IPR001638">
    <property type="entry name" value="Solute-binding_3/MltF_N"/>
</dbReference>
<dbReference type="InterPro" id="IPR008258">
    <property type="entry name" value="Transglycosylase_SLT_dom_1"/>
</dbReference>
<dbReference type="NCBIfam" id="NF008112">
    <property type="entry name" value="PRK10859.1"/>
    <property type="match status" value="1"/>
</dbReference>
<dbReference type="PANTHER" id="PTHR35936">
    <property type="entry name" value="MEMBRANE-BOUND LYTIC MUREIN TRANSGLYCOSYLASE F"/>
    <property type="match status" value="1"/>
</dbReference>
<dbReference type="PANTHER" id="PTHR35936:SF32">
    <property type="entry name" value="MEMBRANE-BOUND LYTIC MUREIN TRANSGLYCOSYLASE F"/>
    <property type="match status" value="1"/>
</dbReference>
<dbReference type="Pfam" id="PF00497">
    <property type="entry name" value="SBP_bac_3"/>
    <property type="match status" value="1"/>
</dbReference>
<dbReference type="Pfam" id="PF01464">
    <property type="entry name" value="SLT"/>
    <property type="match status" value="1"/>
</dbReference>
<dbReference type="SMART" id="SM00062">
    <property type="entry name" value="PBPb"/>
    <property type="match status" value="1"/>
</dbReference>
<dbReference type="SUPFAM" id="SSF53955">
    <property type="entry name" value="Lysozyme-like"/>
    <property type="match status" value="1"/>
</dbReference>
<dbReference type="SUPFAM" id="SSF53850">
    <property type="entry name" value="Periplasmic binding protein-like II"/>
    <property type="match status" value="1"/>
</dbReference>
<dbReference type="PROSITE" id="PS51257">
    <property type="entry name" value="PROKAR_LIPOPROTEIN"/>
    <property type="match status" value="1"/>
</dbReference>
<keyword id="KW-0998">Cell outer membrane</keyword>
<keyword id="KW-0961">Cell wall biogenesis/degradation</keyword>
<keyword id="KW-0456">Lyase</keyword>
<keyword id="KW-0472">Membrane</keyword>
<keyword id="KW-0732">Signal</keyword>
<feature type="signal peptide" evidence="1">
    <location>
        <begin position="1"/>
        <end position="33"/>
    </location>
</feature>
<feature type="chain" id="PRO_0000353920" description="Membrane-bound lytic murein transglycosylase F">
    <location>
        <begin position="34"/>
        <end position="463"/>
    </location>
</feature>
<feature type="region of interest" description="Non-LT domain" evidence="1">
    <location>
        <begin position="34"/>
        <end position="272"/>
    </location>
</feature>
<feature type="region of interest" description="LT domain" evidence="1">
    <location>
        <begin position="273"/>
        <end position="463"/>
    </location>
</feature>
<feature type="active site" evidence="1">
    <location>
        <position position="317"/>
    </location>
</feature>
<accession>B4RVK5</accession>
<accession>F2G308</accession>
<comment type="function">
    <text evidence="1">Murein-degrading enzyme that degrades murein glycan strands and insoluble, high-molecular weight murein sacculi, with the concomitant formation of a 1,6-anhydromuramoyl product. Lytic transglycosylases (LTs) play an integral role in the metabolism of the peptidoglycan (PG) sacculus. Their lytic action creates space within the PG sacculus to allow for its expansion as well as for the insertion of various structures such as secretion systems and flagella.</text>
</comment>
<comment type="catalytic activity">
    <reaction evidence="1">
        <text>Exolytic cleavage of the (1-&gt;4)-beta-glycosidic linkage between N-acetylmuramic acid (MurNAc) and N-acetylglucosamine (GlcNAc) residues in peptidoglycan, from either the reducing or the non-reducing ends of the peptidoglycan chains, with concomitant formation of a 1,6-anhydrobond in the MurNAc residue.</text>
        <dbReference type="EC" id="4.2.2.n1"/>
    </reaction>
</comment>
<comment type="subcellular location">
    <subcellularLocation>
        <location>Cell outer membrane</location>
        <topology>Peripheral membrane protein</topology>
    </subcellularLocation>
    <text evidence="1">Attached to the inner leaflet of the outer membrane.</text>
</comment>
<comment type="domain">
    <text evidence="1">The N-terminal domain does not have lytic activity and probably modulates enzymatic activity. The C-terminal domain is the catalytic active domain.</text>
</comment>
<comment type="similarity">
    <text evidence="1">In the N-terminal section; belongs to the bacterial solute-binding protein 3 family.</text>
</comment>
<comment type="similarity">
    <text evidence="1">In the C-terminal section; belongs to the transglycosylase Slt family.</text>
</comment>
<gene>
    <name evidence="1" type="primary">mltF</name>
    <name type="ordered locus">MADE_1005430</name>
</gene>